<organism>
    <name type="scientific">Shewanella amazonensis (strain ATCC BAA-1098 / SB2B)</name>
    <dbReference type="NCBI Taxonomy" id="326297"/>
    <lineage>
        <taxon>Bacteria</taxon>
        <taxon>Pseudomonadati</taxon>
        <taxon>Pseudomonadota</taxon>
        <taxon>Gammaproteobacteria</taxon>
        <taxon>Alteromonadales</taxon>
        <taxon>Shewanellaceae</taxon>
        <taxon>Shewanella</taxon>
    </lineage>
</organism>
<sequence length="92" mass="10673">MICAVYKSSRKQETYLFVPKRDDFSQVPEPLLQMFGTPLLVMLLPLDRKEKLGIADIDKVRSELAQKGYYLQLPPPKDNLLTQHRRDLGIED</sequence>
<gene>
    <name type="ordered locus">Sama_1929</name>
</gene>
<evidence type="ECO:0000255" key="1">
    <source>
        <dbReference type="HAMAP-Rule" id="MF_01866"/>
    </source>
</evidence>
<dbReference type="EMBL" id="CP000507">
    <property type="protein sequence ID" value="ABM00135.1"/>
    <property type="molecule type" value="Genomic_DNA"/>
</dbReference>
<dbReference type="RefSeq" id="WP_011760042.1">
    <property type="nucleotide sequence ID" value="NC_008700.1"/>
</dbReference>
<dbReference type="SMR" id="A1S6X8"/>
<dbReference type="STRING" id="326297.Sama_1929"/>
<dbReference type="KEGG" id="saz:Sama_1929"/>
<dbReference type="eggNOG" id="COG3100">
    <property type="taxonomic scope" value="Bacteria"/>
</dbReference>
<dbReference type="HOGENOM" id="CLU_155118_1_0_6"/>
<dbReference type="OrthoDB" id="7062382at2"/>
<dbReference type="Proteomes" id="UP000009175">
    <property type="component" value="Chromosome"/>
</dbReference>
<dbReference type="Gene3D" id="3.10.510.20">
    <property type="entry name" value="YcgL domain"/>
    <property type="match status" value="1"/>
</dbReference>
<dbReference type="HAMAP" id="MF_01866">
    <property type="entry name" value="UPF0745"/>
    <property type="match status" value="1"/>
</dbReference>
<dbReference type="InterPro" id="IPR038068">
    <property type="entry name" value="YcgL-like_sf"/>
</dbReference>
<dbReference type="InterPro" id="IPR027354">
    <property type="entry name" value="YcgL_dom"/>
</dbReference>
<dbReference type="PANTHER" id="PTHR38109">
    <property type="entry name" value="PROTEIN YCGL"/>
    <property type="match status" value="1"/>
</dbReference>
<dbReference type="PANTHER" id="PTHR38109:SF1">
    <property type="entry name" value="PROTEIN YCGL"/>
    <property type="match status" value="1"/>
</dbReference>
<dbReference type="Pfam" id="PF05166">
    <property type="entry name" value="YcgL"/>
    <property type="match status" value="1"/>
</dbReference>
<dbReference type="SUPFAM" id="SSF160191">
    <property type="entry name" value="YcgL-like"/>
    <property type="match status" value="1"/>
</dbReference>
<dbReference type="PROSITE" id="PS51648">
    <property type="entry name" value="YCGL"/>
    <property type="match status" value="1"/>
</dbReference>
<reference key="1">
    <citation type="submission" date="2006-12" db="EMBL/GenBank/DDBJ databases">
        <title>Complete sequence of Shewanella amazonensis SB2B.</title>
        <authorList>
            <consortium name="US DOE Joint Genome Institute"/>
            <person name="Copeland A."/>
            <person name="Lucas S."/>
            <person name="Lapidus A."/>
            <person name="Barry K."/>
            <person name="Detter J.C."/>
            <person name="Glavina del Rio T."/>
            <person name="Hammon N."/>
            <person name="Israni S."/>
            <person name="Dalin E."/>
            <person name="Tice H."/>
            <person name="Pitluck S."/>
            <person name="Munk A.C."/>
            <person name="Brettin T."/>
            <person name="Bruce D."/>
            <person name="Han C."/>
            <person name="Tapia R."/>
            <person name="Gilna P."/>
            <person name="Schmutz J."/>
            <person name="Larimer F."/>
            <person name="Land M."/>
            <person name="Hauser L."/>
            <person name="Kyrpides N."/>
            <person name="Mikhailova N."/>
            <person name="Fredrickson J."/>
            <person name="Richardson P."/>
        </authorList>
    </citation>
    <scope>NUCLEOTIDE SEQUENCE [LARGE SCALE GENOMIC DNA]</scope>
    <source>
        <strain>ATCC BAA-1098 / SB2B</strain>
    </source>
</reference>
<protein>
    <recommendedName>
        <fullName evidence="1">YcgL domain-containing protein Sama_1929</fullName>
    </recommendedName>
</protein>
<name>Y1929_SHEAM</name>
<proteinExistence type="inferred from homology"/>
<keyword id="KW-1185">Reference proteome</keyword>
<feature type="chain" id="PRO_0000375363" description="YcgL domain-containing protein Sama_1929">
    <location>
        <begin position="1"/>
        <end position="92"/>
    </location>
</feature>
<feature type="domain" description="YcgL" evidence="1">
    <location>
        <begin position="1"/>
        <end position="85"/>
    </location>
</feature>
<accession>A1S6X8</accession>